<proteinExistence type="inferred from homology"/>
<dbReference type="EMBL" id="DP000181">
    <property type="protein sequence ID" value="ABI93632.1"/>
    <property type="molecule type" value="Genomic_DNA"/>
</dbReference>
<dbReference type="RefSeq" id="NP_001268692.1">
    <property type="nucleotide sequence ID" value="NM_001281763.2"/>
</dbReference>
<dbReference type="SMR" id="Q07E44"/>
<dbReference type="GlyCosmos" id="Q07E44">
    <property type="glycosylation" value="1 site, No reported glycans"/>
</dbReference>
<dbReference type="GeneID" id="101432213"/>
<dbReference type="KEGG" id="dnm:101432213"/>
<dbReference type="CTD" id="7472"/>
<dbReference type="HOGENOM" id="CLU_033039_1_4_1"/>
<dbReference type="OMA" id="ITRMTKC"/>
<dbReference type="OrthoDB" id="5945655at2759"/>
<dbReference type="GO" id="GO:0005737">
    <property type="term" value="C:cytoplasm"/>
    <property type="evidence" value="ECO:0007669"/>
    <property type="project" value="Ensembl"/>
</dbReference>
<dbReference type="GO" id="GO:0005615">
    <property type="term" value="C:extracellular space"/>
    <property type="evidence" value="ECO:0007669"/>
    <property type="project" value="TreeGrafter"/>
</dbReference>
<dbReference type="GO" id="GO:0005125">
    <property type="term" value="F:cytokine activity"/>
    <property type="evidence" value="ECO:0007669"/>
    <property type="project" value="Ensembl"/>
</dbReference>
<dbReference type="GO" id="GO:0005109">
    <property type="term" value="F:frizzled binding"/>
    <property type="evidence" value="ECO:0007669"/>
    <property type="project" value="Ensembl"/>
</dbReference>
<dbReference type="GO" id="GO:0060070">
    <property type="term" value="P:canonical Wnt signaling pathway"/>
    <property type="evidence" value="ECO:0007669"/>
    <property type="project" value="Ensembl"/>
</dbReference>
<dbReference type="GO" id="GO:0045165">
    <property type="term" value="P:cell fate commitment"/>
    <property type="evidence" value="ECO:0007669"/>
    <property type="project" value="TreeGrafter"/>
</dbReference>
<dbReference type="GO" id="GO:0033278">
    <property type="term" value="P:cell proliferation in midbrain"/>
    <property type="evidence" value="ECO:0007669"/>
    <property type="project" value="Ensembl"/>
</dbReference>
<dbReference type="GO" id="GO:0007267">
    <property type="term" value="P:cell-cell signaling"/>
    <property type="evidence" value="ECO:0007669"/>
    <property type="project" value="Ensembl"/>
</dbReference>
<dbReference type="GO" id="GO:0071560">
    <property type="term" value="P:cellular response to transforming growth factor beta stimulus"/>
    <property type="evidence" value="ECO:0007669"/>
    <property type="project" value="Ensembl"/>
</dbReference>
<dbReference type="GO" id="GO:0061180">
    <property type="term" value="P:mammary gland epithelium development"/>
    <property type="evidence" value="ECO:0007669"/>
    <property type="project" value="Ensembl"/>
</dbReference>
<dbReference type="GO" id="GO:1904948">
    <property type="term" value="P:midbrain dopaminergic neuron differentiation"/>
    <property type="evidence" value="ECO:0007669"/>
    <property type="project" value="Ensembl"/>
</dbReference>
<dbReference type="GO" id="GO:0048146">
    <property type="term" value="P:positive regulation of fibroblast proliferation"/>
    <property type="evidence" value="ECO:0007669"/>
    <property type="project" value="Ensembl"/>
</dbReference>
<dbReference type="GO" id="GO:0045944">
    <property type="term" value="P:positive regulation of transcription by RNA polymerase II"/>
    <property type="evidence" value="ECO:0007669"/>
    <property type="project" value="Ensembl"/>
</dbReference>
<dbReference type="CDD" id="cd19345">
    <property type="entry name" value="Wnt_Wnt2"/>
    <property type="match status" value="1"/>
</dbReference>
<dbReference type="FunFam" id="3.30.2460.20:FF:000001">
    <property type="entry name" value="Wnt homolog"/>
    <property type="match status" value="1"/>
</dbReference>
<dbReference type="Gene3D" id="3.30.2460.20">
    <property type="match status" value="1"/>
</dbReference>
<dbReference type="InterPro" id="IPR005817">
    <property type="entry name" value="Wnt"/>
</dbReference>
<dbReference type="InterPro" id="IPR009140">
    <property type="entry name" value="Wnt2"/>
</dbReference>
<dbReference type="InterPro" id="IPR043158">
    <property type="entry name" value="Wnt_C"/>
</dbReference>
<dbReference type="InterPro" id="IPR018161">
    <property type="entry name" value="Wnt_CS"/>
</dbReference>
<dbReference type="PANTHER" id="PTHR12027:SF86">
    <property type="entry name" value="PROTEIN WNT-2"/>
    <property type="match status" value="1"/>
</dbReference>
<dbReference type="PANTHER" id="PTHR12027">
    <property type="entry name" value="WNT RELATED"/>
    <property type="match status" value="1"/>
</dbReference>
<dbReference type="Pfam" id="PF00110">
    <property type="entry name" value="wnt"/>
    <property type="match status" value="1"/>
</dbReference>
<dbReference type="PRINTS" id="PR01842">
    <property type="entry name" value="WNT2PROTEIN"/>
</dbReference>
<dbReference type="PRINTS" id="PR01349">
    <property type="entry name" value="WNTPROTEIN"/>
</dbReference>
<dbReference type="SMART" id="SM00097">
    <property type="entry name" value="WNT1"/>
    <property type="match status" value="1"/>
</dbReference>
<dbReference type="PROSITE" id="PS00246">
    <property type="entry name" value="WNT1"/>
    <property type="match status" value="1"/>
</dbReference>
<gene>
    <name type="primary">WNT2</name>
</gene>
<sequence length="360" mass="40426">MNAPLGGIWLWLPLLLTWLTPEVSSSWWYMRATGGSSRVMCDNVPGLVSRQRQLCHRHPDVMRAIGLGVAEWTAECQHQFRQHRWNCNTLDRDHSLFGRVLLRSSRESAFVYAISSAGVVFAITRACSQGELKSCSCDPKKKGTAKDSKGTFDWGGCSDNIDHGIKFARAFVDAKERKGKDARALMNLHNNRAGRKAVKRFLKQECKCHGVSGSCTLRTCWLAMADFRKTGDYLWRKYNGAIQVVMNQDGTGFTVANKRFKKPTKNDLVYFENSPDYCIRDRDAGSLGTAGRVCNLTSRGMDSCEVMCCGRGYDTSHVTRMTKCECKFHWCCAVRCQDCLEALDVHTCKAPKSADWAVPT</sequence>
<evidence type="ECO:0000250" key="1">
    <source>
        <dbReference type="UniProtKB" id="P09544"/>
    </source>
</evidence>
<evidence type="ECO:0000250" key="2">
    <source>
        <dbReference type="UniProtKB" id="P21552"/>
    </source>
</evidence>
<evidence type="ECO:0000250" key="3">
    <source>
        <dbReference type="UniProtKB" id="P28026"/>
    </source>
</evidence>
<evidence type="ECO:0000250" key="4">
    <source>
        <dbReference type="UniProtKB" id="P56704"/>
    </source>
</evidence>
<evidence type="ECO:0000255" key="5"/>
<evidence type="ECO:0000305" key="6"/>
<keyword id="KW-0217">Developmental protein</keyword>
<keyword id="KW-1015">Disulfide bond</keyword>
<keyword id="KW-0272">Extracellular matrix</keyword>
<keyword id="KW-0325">Glycoprotein</keyword>
<keyword id="KW-0449">Lipoprotein</keyword>
<keyword id="KW-0964">Secreted</keyword>
<keyword id="KW-0732">Signal</keyword>
<keyword id="KW-0879">Wnt signaling pathway</keyword>
<protein>
    <recommendedName>
        <fullName>Protein Wnt-2</fullName>
    </recommendedName>
</protein>
<organism>
    <name type="scientific">Dasypus novemcinctus</name>
    <name type="common">Nine-banded armadillo</name>
    <dbReference type="NCBI Taxonomy" id="9361"/>
    <lineage>
        <taxon>Eukaryota</taxon>
        <taxon>Metazoa</taxon>
        <taxon>Chordata</taxon>
        <taxon>Craniata</taxon>
        <taxon>Vertebrata</taxon>
        <taxon>Euteleostomi</taxon>
        <taxon>Mammalia</taxon>
        <taxon>Eutheria</taxon>
        <taxon>Xenarthra</taxon>
        <taxon>Cingulata</taxon>
        <taxon>Dasypodidae</taxon>
        <taxon>Dasypus</taxon>
    </lineage>
</organism>
<comment type="function">
    <text evidence="1 2">Ligand for members of the frizzled family of seven transmembrane receptors. Functions in the canonical Wnt signaling pathway that results in activation of transcription factors of the TCF/LEF family (By similarity).</text>
</comment>
<comment type="subcellular location">
    <subcellularLocation>
        <location evidence="1">Secreted</location>
        <location evidence="1">Extracellular space</location>
        <location evidence="1">Extracellular matrix</location>
    </subcellularLocation>
    <subcellularLocation>
        <location evidence="1">Secreted</location>
    </subcellularLocation>
</comment>
<comment type="PTM">
    <text evidence="1">Palmitoleoylation is required for efficient binding to frizzled receptors. Depalmitoleoylation leads to Wnt signaling pathway inhibition.</text>
</comment>
<comment type="similarity">
    <text evidence="6">Belongs to the Wnt family.</text>
</comment>
<reference key="1">
    <citation type="submission" date="2006-09" db="EMBL/GenBank/DDBJ databases">
        <title>NISC comparative sequencing initiative.</title>
        <authorList>
            <person name="Antonellis A."/>
            <person name="Ayele K."/>
            <person name="Benjamin B."/>
            <person name="Blakesley R.W."/>
            <person name="Boakye A."/>
            <person name="Bouffard G.G."/>
            <person name="Brinkley C."/>
            <person name="Brooks S."/>
            <person name="Chu G."/>
            <person name="Coleman H."/>
            <person name="Engle J."/>
            <person name="Gestole M."/>
            <person name="Greene A."/>
            <person name="Guan X."/>
            <person name="Gupta J."/>
            <person name="Haghighi P."/>
            <person name="Han J."/>
            <person name="Hansen N."/>
            <person name="Ho S.-L."/>
            <person name="Hu P."/>
            <person name="Hunter G."/>
            <person name="Hurle B."/>
            <person name="Idol J.R."/>
            <person name="Kwong P."/>
            <person name="Laric P."/>
            <person name="Larson S."/>
            <person name="Lee-Lin S.-Q."/>
            <person name="Legaspi R."/>
            <person name="Madden M."/>
            <person name="Maduro Q.L."/>
            <person name="Maduro V.B."/>
            <person name="Margulies E.H."/>
            <person name="Masiello C."/>
            <person name="Maskeri B."/>
            <person name="McDowell J."/>
            <person name="Mojidi H.A."/>
            <person name="Mullikin J.C."/>
            <person name="Oestreicher J.S."/>
            <person name="Park M."/>
            <person name="Portnoy M.E."/>
            <person name="Prasad A."/>
            <person name="Puri O."/>
            <person name="Reddix-Dugue N."/>
            <person name="Schandler K."/>
            <person name="Schueler M.G."/>
            <person name="Sison C."/>
            <person name="Stantripop S."/>
            <person name="Stephen E."/>
            <person name="Taye A."/>
            <person name="Thomas J.W."/>
            <person name="Thomas P.J."/>
            <person name="Tsipouri V."/>
            <person name="Ung L."/>
            <person name="Vogt J.L."/>
            <person name="Wetherby K.D."/>
            <person name="Young A."/>
            <person name="Green E.D."/>
        </authorList>
    </citation>
    <scope>NUCLEOTIDE SEQUENCE [LARGE SCALE GENOMIC DNA]</scope>
</reference>
<accession>Q07E44</accession>
<feature type="signal peptide" evidence="5">
    <location>
        <begin position="1"/>
        <end position="25"/>
    </location>
</feature>
<feature type="chain" id="PRO_0000260341" description="Protein Wnt-2">
    <location>
        <begin position="26"/>
        <end position="360"/>
    </location>
</feature>
<feature type="lipid moiety-binding region" description="O-palmitoleoyl serine; by PORCN" evidence="4">
    <location>
        <position position="212"/>
    </location>
</feature>
<feature type="glycosylation site" description="N-linked (GlcNAc...) asparagine" evidence="5">
    <location>
        <position position="295"/>
    </location>
</feature>
<feature type="disulfide bond" evidence="3">
    <location>
        <begin position="76"/>
        <end position="87"/>
    </location>
</feature>
<feature type="disulfide bond" evidence="3">
    <location>
        <begin position="127"/>
        <end position="135"/>
    </location>
</feature>
<feature type="disulfide bond" evidence="3">
    <location>
        <begin position="137"/>
        <end position="157"/>
    </location>
</feature>
<feature type="disulfide bond" evidence="3">
    <location>
        <begin position="206"/>
        <end position="220"/>
    </location>
</feature>
<feature type="disulfide bond" evidence="3">
    <location>
        <begin position="208"/>
        <end position="215"/>
    </location>
</feature>
<feature type="disulfide bond" evidence="3">
    <location>
        <begin position="278"/>
        <end position="309"/>
    </location>
</feature>
<feature type="disulfide bond" evidence="3">
    <location>
        <begin position="294"/>
        <end position="304"/>
    </location>
</feature>
<feature type="disulfide bond" evidence="3">
    <location>
        <begin position="308"/>
        <end position="348"/>
    </location>
</feature>
<feature type="disulfide bond" evidence="3">
    <location>
        <begin position="324"/>
        <end position="339"/>
    </location>
</feature>
<feature type="disulfide bond" evidence="3">
    <location>
        <begin position="326"/>
        <end position="336"/>
    </location>
</feature>
<feature type="disulfide bond" evidence="3">
    <location>
        <begin position="331"/>
        <end position="332"/>
    </location>
</feature>
<name>WNT2_DASNO</name>